<protein>
    <recommendedName>
        <fullName>Polypeptide N-acetylgalactosaminyltransferase 18</fullName>
        <ecNumber>2.4.1.41</ecNumber>
    </recommendedName>
    <alternativeName>
        <fullName>Polypeptide GalNAc transferase 18</fullName>
        <shortName>GalNAc-T18</shortName>
    </alternativeName>
    <alternativeName>
        <fullName>Polypeptide GalNAc transferase-like protein 4</fullName>
        <shortName>GalNAc-T-like protein 4</shortName>
        <shortName>pp-GaNTase-like protein 4</shortName>
    </alternativeName>
    <alternativeName>
        <fullName>Polypeptide N-acetylgalactosaminyltransferase-like protein 4</fullName>
    </alternativeName>
    <alternativeName>
        <fullName>Protein-UDP acetylgalactosaminyltransferase-like protein 4</fullName>
    </alternativeName>
    <alternativeName>
        <fullName>UDP-GalNAc:polypeptide N-acetylgalactosaminyltransferase-like protein 4</fullName>
    </alternativeName>
</protein>
<sequence length="622" mass="71096">MVCTRKTKTLVSTCVILSGMTNIICLLYVGWVTNYIASVYVRGQEPVPDKKLEEDKGDTLKIIERLDHLENVIKQHIQEAPAKPEEAEAEPFTDSSLFAHWGQELSPEGRRVALKQFQYYGYNAYLSDRLPLDRPLPDLRPSGCRNLSFPDSLPEVSIVFIFVNEALSVLLRSIHSAMERTPSHLLKEIILVDDNSSNEELKEKLTEYVDKVNGQKPGFIKVVRHSKQEGLIRSRVSGWRAATAPVVALFDAHVEFNVGWAEPVLTRIKENRKRIISPSFDNIKYDNFEIEEYPLAAQGFDWELWCRYLNPPKAWWKLENSTAPIRSPALIGCFIVDRQYFEEIGLLDEGMEVYGGENVELGIRVSEISHTGLSSAPMMVWQCGGSVEVLPCSRIAHIERAHKPYTEDLTAHVRRNALRVAEVWMDEFKSHVYMAWNIPQEDSGIDIGDITARKALRKQLQCKTFRWYLVSVYPEMRMYSDIIAYGVLQNSLKTDLCLDQGPDTENVPIVYICHGMTPQNVYYTSSQQIHVGILSPTVDDDDNRCLVDVNSRPRLIECSYAKAKRMKLHWQFSQGGSIQNRKSKRCLELQENSDMEFGFQLVLQKCSGQHWTITNVLRSLVS</sequence>
<comment type="function">
    <text evidence="3">Catalyzes the initial reaction in O-linked oligosaccharide biosynthesis, the transfer of an N-acetyl-D-galactosamine (GalNAc) residue from UDP-GalNAc to a serine or threonine residue on the protein receptor.</text>
</comment>
<comment type="catalytic activity">
    <reaction evidence="3">
        <text>L-seryl-[protein] + UDP-N-acetyl-alpha-D-galactosamine = a 3-O-[N-acetyl-alpha-D-galactosaminyl]-L-seryl-[protein] + UDP + H(+)</text>
        <dbReference type="Rhea" id="RHEA:23956"/>
        <dbReference type="Rhea" id="RHEA-COMP:9863"/>
        <dbReference type="Rhea" id="RHEA-COMP:12788"/>
        <dbReference type="ChEBI" id="CHEBI:15378"/>
        <dbReference type="ChEBI" id="CHEBI:29999"/>
        <dbReference type="ChEBI" id="CHEBI:53604"/>
        <dbReference type="ChEBI" id="CHEBI:58223"/>
        <dbReference type="ChEBI" id="CHEBI:67138"/>
        <dbReference type="EC" id="2.4.1.41"/>
    </reaction>
    <physiologicalReaction direction="left-to-right" evidence="3">
        <dbReference type="Rhea" id="RHEA:23957"/>
    </physiologicalReaction>
</comment>
<comment type="catalytic activity">
    <reaction evidence="3">
        <text>L-threonyl-[protein] + UDP-N-acetyl-alpha-D-galactosamine = a 3-O-[N-acetyl-alpha-D-galactosaminyl]-L-threonyl-[protein] + UDP + H(+)</text>
        <dbReference type="Rhea" id="RHEA:52424"/>
        <dbReference type="Rhea" id="RHEA-COMP:11060"/>
        <dbReference type="Rhea" id="RHEA-COMP:11689"/>
        <dbReference type="ChEBI" id="CHEBI:15378"/>
        <dbReference type="ChEBI" id="CHEBI:30013"/>
        <dbReference type="ChEBI" id="CHEBI:58223"/>
        <dbReference type="ChEBI" id="CHEBI:67138"/>
        <dbReference type="ChEBI" id="CHEBI:87075"/>
        <dbReference type="EC" id="2.4.1.41"/>
    </reaction>
    <physiologicalReaction direction="left-to-right" evidence="3">
        <dbReference type="Rhea" id="RHEA:52425"/>
    </physiologicalReaction>
</comment>
<comment type="cofactor">
    <cofactor evidence="1">
        <name>Mn(2+)</name>
        <dbReference type="ChEBI" id="CHEBI:29035"/>
    </cofactor>
</comment>
<comment type="pathway">
    <text evidence="3">Protein modification; protein glycosylation.</text>
</comment>
<comment type="subcellular location">
    <subcellularLocation>
        <location evidence="1">Golgi apparatus membrane</location>
        <topology evidence="1">Single-pass type II membrane protein</topology>
    </subcellularLocation>
</comment>
<comment type="domain">
    <text evidence="1">There are two conserved domains in the glycosyltransferase region: the N-terminal domain (domain A, also called GT1 motif), which is probably involved in manganese coordination and substrate binding and the C-terminal domain (domain B, also called Gal/GalNAc-T motif), which is probably involved in catalytic reaction and UDP-Gal binding.</text>
</comment>
<comment type="domain">
    <text evidence="1">The ricin B-type lectin domain binds to GalNAc and contributes to the glycopeptide specificity.</text>
</comment>
<comment type="similarity">
    <text evidence="6">Belongs to the glycosyltransferase 2 family. GalNAc-T subfamily.</text>
</comment>
<comment type="online information" name="Functional Glycomics Gateway - GTase">
    <link uri="http://www.functionalglycomics.org/glycomics/search/jsp/landing.jsp?query=gt_mou_526"/>
    <text>Putative polypeptide N-acetylgalactosaminyltransferase-like protein 4</text>
</comment>
<reference key="1">
    <citation type="journal article" date="2004" name="Genome Res.">
        <title>The status, quality, and expansion of the NIH full-length cDNA project: the Mammalian Gene Collection (MGC).</title>
        <authorList>
            <consortium name="The MGC Project Team"/>
        </authorList>
    </citation>
    <scope>NUCLEOTIDE SEQUENCE [LARGE SCALE MRNA]</scope>
    <source>
        <strain>FVB/N</strain>
        <tissue>Kidney</tissue>
    </source>
</reference>
<evidence type="ECO:0000250" key="1"/>
<evidence type="ECO:0000250" key="2">
    <source>
        <dbReference type="UniProtKB" id="Q10471"/>
    </source>
</evidence>
<evidence type="ECO:0000250" key="3">
    <source>
        <dbReference type="UniProtKB" id="Q6P9A2"/>
    </source>
</evidence>
<evidence type="ECO:0000255" key="4"/>
<evidence type="ECO:0000255" key="5">
    <source>
        <dbReference type="PROSITE-ProRule" id="PRU00174"/>
    </source>
</evidence>
<evidence type="ECO:0000305" key="6"/>
<proteinExistence type="evidence at transcript level"/>
<organism>
    <name type="scientific">Mus musculus</name>
    <name type="common">Mouse</name>
    <dbReference type="NCBI Taxonomy" id="10090"/>
    <lineage>
        <taxon>Eukaryota</taxon>
        <taxon>Metazoa</taxon>
        <taxon>Chordata</taxon>
        <taxon>Craniata</taxon>
        <taxon>Vertebrata</taxon>
        <taxon>Euteleostomi</taxon>
        <taxon>Mammalia</taxon>
        <taxon>Eutheria</taxon>
        <taxon>Euarchontoglires</taxon>
        <taxon>Glires</taxon>
        <taxon>Rodentia</taxon>
        <taxon>Myomorpha</taxon>
        <taxon>Muroidea</taxon>
        <taxon>Muridae</taxon>
        <taxon>Murinae</taxon>
        <taxon>Mus</taxon>
        <taxon>Mus</taxon>
    </lineage>
</organism>
<feature type="chain" id="PRO_0000059142" description="Polypeptide N-acetylgalactosaminyltransferase 18">
    <location>
        <begin position="1"/>
        <end position="622"/>
    </location>
</feature>
<feature type="topological domain" description="Cytoplasmic" evidence="4">
    <location>
        <begin position="1"/>
        <end position="12"/>
    </location>
</feature>
<feature type="transmembrane region" description="Helical; Signal-anchor for type II membrane protein" evidence="4">
    <location>
        <begin position="13"/>
        <end position="35"/>
    </location>
</feature>
<feature type="topological domain" description="Lumenal" evidence="4">
    <location>
        <begin position="36"/>
        <end position="622"/>
    </location>
</feature>
<feature type="domain" description="Ricin B-type lectin" evidence="5">
    <location>
        <begin position="484"/>
        <end position="614"/>
    </location>
</feature>
<feature type="region of interest" description="Catalytic subdomain A">
    <location>
        <begin position="153"/>
        <end position="267"/>
    </location>
</feature>
<feature type="region of interest" description="Catalytic subdomain B">
    <location>
        <begin position="324"/>
        <end position="400"/>
    </location>
</feature>
<feature type="binding site" evidence="2">
    <location>
        <position position="194"/>
    </location>
    <ligand>
        <name>substrate</name>
    </ligand>
</feature>
<feature type="binding site" evidence="2">
    <location>
        <position position="251"/>
    </location>
    <ligand>
        <name>Mn(2+)</name>
        <dbReference type="ChEBI" id="CHEBI:29035"/>
    </ligand>
</feature>
<feature type="binding site" evidence="2">
    <location>
        <position position="253"/>
    </location>
    <ligand>
        <name>Mn(2+)</name>
        <dbReference type="ChEBI" id="CHEBI:29035"/>
    </ligand>
</feature>
<feature type="binding site" evidence="2">
    <location>
        <position position="397"/>
    </location>
    <ligand>
        <name>Mn(2+)</name>
        <dbReference type="ChEBI" id="CHEBI:29035"/>
    </ligand>
</feature>
<feature type="binding site" evidence="2">
    <location>
        <position position="400"/>
    </location>
    <ligand>
        <name>substrate</name>
    </ligand>
</feature>
<feature type="binding site" evidence="2">
    <location>
        <position position="405"/>
    </location>
    <ligand>
        <name>substrate</name>
    </ligand>
</feature>
<feature type="glycosylation site" description="N-linked (GlcNAc...) asparagine" evidence="4">
    <location>
        <position position="146"/>
    </location>
</feature>
<feature type="glycosylation site" description="N-linked (GlcNAc...) asparagine" evidence="4">
    <location>
        <position position="195"/>
    </location>
</feature>
<feature type="glycosylation site" description="N-linked (GlcNAc...) asparagine" evidence="4">
    <location>
        <position position="320"/>
    </location>
</feature>
<feature type="disulfide bond" evidence="5">
    <location>
        <begin position="144"/>
        <end position="392"/>
    </location>
</feature>
<feature type="disulfide bond" evidence="5">
    <location>
        <begin position="383"/>
        <end position="462"/>
    </location>
</feature>
<feature type="disulfide bond" evidence="5">
    <location>
        <begin position="497"/>
        <end position="513"/>
    </location>
</feature>
<feature type="disulfide bond" evidence="5">
    <location>
        <begin position="545"/>
        <end position="558"/>
    </location>
</feature>
<feature type="disulfide bond" evidence="5">
    <location>
        <begin position="586"/>
        <end position="606"/>
    </location>
</feature>
<keyword id="KW-1015">Disulfide bond</keyword>
<keyword id="KW-0325">Glycoprotein</keyword>
<keyword id="KW-0328">Glycosyltransferase</keyword>
<keyword id="KW-0333">Golgi apparatus</keyword>
<keyword id="KW-0430">Lectin</keyword>
<keyword id="KW-0464">Manganese</keyword>
<keyword id="KW-0472">Membrane</keyword>
<keyword id="KW-0479">Metal-binding</keyword>
<keyword id="KW-1185">Reference proteome</keyword>
<keyword id="KW-0735">Signal-anchor</keyword>
<keyword id="KW-0808">Transferase</keyword>
<keyword id="KW-0812">Transmembrane</keyword>
<keyword id="KW-1133">Transmembrane helix</keyword>
<gene>
    <name type="primary">Galnt18</name>
    <name type="synonym">Galntl4</name>
</gene>
<name>GLT18_MOUSE</name>
<accession>Q8K1B9</accession>
<dbReference type="EC" id="2.4.1.41"/>
<dbReference type="EMBL" id="BC024988">
    <property type="protein sequence ID" value="AAH24988.1"/>
    <property type="molecule type" value="mRNA"/>
</dbReference>
<dbReference type="CCDS" id="CCDS21751.1"/>
<dbReference type="RefSeq" id="NP_776100.2">
    <property type="nucleotide sequence ID" value="NM_173739.3"/>
</dbReference>
<dbReference type="SMR" id="Q8K1B9"/>
<dbReference type="FunCoup" id="Q8K1B9">
    <property type="interactions" value="243"/>
</dbReference>
<dbReference type="STRING" id="10090.ENSMUSP00000043636"/>
<dbReference type="CAZy" id="CBM13">
    <property type="family name" value="Carbohydrate-Binding Module Family 13"/>
</dbReference>
<dbReference type="CAZy" id="GT27">
    <property type="family name" value="Glycosyltransferase Family 27"/>
</dbReference>
<dbReference type="GlyCosmos" id="Q8K1B9">
    <property type="glycosylation" value="3 sites, No reported glycans"/>
</dbReference>
<dbReference type="GlyGen" id="Q8K1B9">
    <property type="glycosylation" value="5 sites, 2 N-linked glycans (2 sites), 1 O-linked glycan (2 sites)"/>
</dbReference>
<dbReference type="iPTMnet" id="Q8K1B9"/>
<dbReference type="PhosphoSitePlus" id="Q8K1B9"/>
<dbReference type="PaxDb" id="10090-ENSMUSP00000043636"/>
<dbReference type="ProteomicsDB" id="271234"/>
<dbReference type="Antibodypedia" id="2327">
    <property type="antibodies" value="48 antibodies from 18 providers"/>
</dbReference>
<dbReference type="DNASU" id="233733"/>
<dbReference type="Ensembl" id="ENSMUST00000049430.15">
    <property type="protein sequence ID" value="ENSMUSP00000043636.9"/>
    <property type="gene ID" value="ENSMUSG00000038296.15"/>
</dbReference>
<dbReference type="GeneID" id="233733"/>
<dbReference type="KEGG" id="mmu:233733"/>
<dbReference type="UCSC" id="uc009jgc.1">
    <property type="organism name" value="mouse"/>
</dbReference>
<dbReference type="AGR" id="MGI:2446239"/>
<dbReference type="CTD" id="374378"/>
<dbReference type="MGI" id="MGI:2446239">
    <property type="gene designation" value="Galnt18"/>
</dbReference>
<dbReference type="VEuPathDB" id="HostDB:ENSMUSG00000038296"/>
<dbReference type="eggNOG" id="KOG3736">
    <property type="taxonomic scope" value="Eukaryota"/>
</dbReference>
<dbReference type="GeneTree" id="ENSGT00940000155456"/>
<dbReference type="HOGENOM" id="CLU_013477_4_0_1"/>
<dbReference type="InParanoid" id="Q8K1B9"/>
<dbReference type="OMA" id="WHRGNKS"/>
<dbReference type="OrthoDB" id="9924649at2759"/>
<dbReference type="PhylomeDB" id="Q8K1B9"/>
<dbReference type="TreeFam" id="TF313267"/>
<dbReference type="Reactome" id="R-MMU-913709">
    <property type="pathway name" value="O-linked glycosylation of mucins"/>
</dbReference>
<dbReference type="UniPathway" id="UPA00378"/>
<dbReference type="BioGRID-ORCS" id="233733">
    <property type="hits" value="4 hits in 61 CRISPR screens"/>
</dbReference>
<dbReference type="ChiTaRS" id="Galnt18">
    <property type="organism name" value="mouse"/>
</dbReference>
<dbReference type="PRO" id="PR:Q8K1B9"/>
<dbReference type="Proteomes" id="UP000000589">
    <property type="component" value="Chromosome 7"/>
</dbReference>
<dbReference type="RNAct" id="Q8K1B9">
    <property type="molecule type" value="protein"/>
</dbReference>
<dbReference type="Bgee" id="ENSMUSG00000038296">
    <property type="expression patterns" value="Expressed in right lung and 210 other cell types or tissues"/>
</dbReference>
<dbReference type="ExpressionAtlas" id="Q8K1B9">
    <property type="expression patterns" value="baseline and differential"/>
</dbReference>
<dbReference type="GO" id="GO:0000139">
    <property type="term" value="C:Golgi membrane"/>
    <property type="evidence" value="ECO:0007669"/>
    <property type="project" value="UniProtKB-SubCell"/>
</dbReference>
<dbReference type="GO" id="GO:0030246">
    <property type="term" value="F:carbohydrate binding"/>
    <property type="evidence" value="ECO:0007669"/>
    <property type="project" value="UniProtKB-KW"/>
</dbReference>
<dbReference type="GO" id="GO:0046872">
    <property type="term" value="F:metal ion binding"/>
    <property type="evidence" value="ECO:0007669"/>
    <property type="project" value="UniProtKB-KW"/>
</dbReference>
<dbReference type="GO" id="GO:0004653">
    <property type="term" value="F:polypeptide N-acetylgalactosaminyltransferase activity"/>
    <property type="evidence" value="ECO:0007669"/>
    <property type="project" value="UniProtKB-EC"/>
</dbReference>
<dbReference type="GO" id="GO:0006486">
    <property type="term" value="P:protein glycosylation"/>
    <property type="evidence" value="ECO:0007669"/>
    <property type="project" value="UniProtKB-UniPathway"/>
</dbReference>
<dbReference type="CDD" id="cd23475">
    <property type="entry name" value="beta-trefoil_Ricin_GALNT18"/>
    <property type="match status" value="1"/>
</dbReference>
<dbReference type="CDD" id="cd02510">
    <property type="entry name" value="pp-GalNAc-T"/>
    <property type="match status" value="1"/>
</dbReference>
<dbReference type="FunFam" id="2.80.10.50:FF:000017">
    <property type="entry name" value="Polypeptide N-acetylgalactosaminyltransferase"/>
    <property type="match status" value="1"/>
</dbReference>
<dbReference type="FunFam" id="3.90.550.10:FF:000012">
    <property type="entry name" value="Polypeptide N-acetylgalactosaminyltransferase"/>
    <property type="match status" value="1"/>
</dbReference>
<dbReference type="Gene3D" id="2.80.10.50">
    <property type="match status" value="1"/>
</dbReference>
<dbReference type="Gene3D" id="3.90.550.10">
    <property type="entry name" value="Spore Coat Polysaccharide Biosynthesis Protein SpsA, Chain A"/>
    <property type="match status" value="1"/>
</dbReference>
<dbReference type="InterPro" id="IPR045885">
    <property type="entry name" value="GalNAc-T"/>
</dbReference>
<dbReference type="InterPro" id="IPR001173">
    <property type="entry name" value="Glyco_trans_2-like"/>
</dbReference>
<dbReference type="InterPro" id="IPR029044">
    <property type="entry name" value="Nucleotide-diphossugar_trans"/>
</dbReference>
<dbReference type="InterPro" id="IPR035992">
    <property type="entry name" value="Ricin_B-like_lectins"/>
</dbReference>
<dbReference type="InterPro" id="IPR000772">
    <property type="entry name" value="Ricin_B_lectin"/>
</dbReference>
<dbReference type="PANTHER" id="PTHR11675">
    <property type="entry name" value="N-ACETYLGALACTOSAMINYLTRANSFERASE"/>
    <property type="match status" value="1"/>
</dbReference>
<dbReference type="PANTHER" id="PTHR11675:SF37">
    <property type="entry name" value="POLYPEPTIDE N-ACETYLGALACTOSAMINYLTRANSFERASE 18"/>
    <property type="match status" value="1"/>
</dbReference>
<dbReference type="Pfam" id="PF00535">
    <property type="entry name" value="Glycos_transf_2"/>
    <property type="match status" value="1"/>
</dbReference>
<dbReference type="Pfam" id="PF00652">
    <property type="entry name" value="Ricin_B_lectin"/>
    <property type="match status" value="1"/>
</dbReference>
<dbReference type="SMART" id="SM00458">
    <property type="entry name" value="RICIN"/>
    <property type="match status" value="1"/>
</dbReference>
<dbReference type="SUPFAM" id="SSF53448">
    <property type="entry name" value="Nucleotide-diphospho-sugar transferases"/>
    <property type="match status" value="1"/>
</dbReference>
<dbReference type="SUPFAM" id="SSF50370">
    <property type="entry name" value="Ricin B-like lectins"/>
    <property type="match status" value="1"/>
</dbReference>
<dbReference type="PROSITE" id="PS50231">
    <property type="entry name" value="RICIN_B_LECTIN"/>
    <property type="match status" value="1"/>
</dbReference>